<sequence length="513" mass="55169">MQLNSTEISELIKQRIAQFNVVSEAHNEGTIVSVSDGVIRIHGLAECMQGEMISLPGNRYAIALNLERDSVGAVVMGPYADLAEGMKVKCTGRILEVPVGRGLLGRVVNTLGAPIDGKGPLENDGFSAVEAIAPGVIERQSVDQPVQTGYKSVDAMIPIGRGQRELIIGDRQTGKTALAIDAIINQRDSGIKCVYVAIGQKASTISNVVRKLEEHGALANTIVVVATASESAALQYLAPYAGCAMGEYFRDRGEDALIVYDDLSKQAVAYRQISLLLRRPPGREAFPGDVFYLHSRLLERAARVNAEYVEAFTKGEVKGKTGSLTALPIIETQAGDVSAFVPTNVISITDGQIFLETNLFNAGIRPAVNPGISVSRVGGAAQTKIMKKLSGGIRTALAQYRELAAFSQFASDLDDATRKQLDHGQKVTELLKQKQYAPMSVAQQSLVLFAAERGYLADVELAKIGSFEAALLAYVDRDHAPLMQEINQSGGYNDEIEGKLKGILDSFKATQSW</sequence>
<proteinExistence type="inferred from homology"/>
<gene>
    <name evidence="1" type="primary">atpA</name>
    <name type="ordered locus">KPN78578_40980</name>
    <name type="ORF">KPN_04139</name>
</gene>
<evidence type="ECO:0000255" key="1">
    <source>
        <dbReference type="HAMAP-Rule" id="MF_01346"/>
    </source>
</evidence>
<accession>A6TG38</accession>
<dbReference type="EC" id="7.1.2.2" evidence="1"/>
<dbReference type="EMBL" id="CP000647">
    <property type="protein sequence ID" value="ABR79522.1"/>
    <property type="molecule type" value="Genomic_DNA"/>
</dbReference>
<dbReference type="RefSeq" id="WP_004144995.1">
    <property type="nucleotide sequence ID" value="NC_009648.1"/>
</dbReference>
<dbReference type="SMR" id="A6TG38"/>
<dbReference type="STRING" id="272620.KPN_04139"/>
<dbReference type="jPOST" id="A6TG38"/>
<dbReference type="PaxDb" id="272620-KPN_04139"/>
<dbReference type="EnsemblBacteria" id="ABR79522">
    <property type="protein sequence ID" value="ABR79522"/>
    <property type="gene ID" value="KPN_04139"/>
</dbReference>
<dbReference type="GeneID" id="93251484"/>
<dbReference type="KEGG" id="kpn:KPN_04139"/>
<dbReference type="HOGENOM" id="CLU_010091_2_1_6"/>
<dbReference type="Proteomes" id="UP000000265">
    <property type="component" value="Chromosome"/>
</dbReference>
<dbReference type="GO" id="GO:0005886">
    <property type="term" value="C:plasma membrane"/>
    <property type="evidence" value="ECO:0007669"/>
    <property type="project" value="UniProtKB-SubCell"/>
</dbReference>
<dbReference type="GO" id="GO:0045259">
    <property type="term" value="C:proton-transporting ATP synthase complex"/>
    <property type="evidence" value="ECO:0007669"/>
    <property type="project" value="UniProtKB-KW"/>
</dbReference>
<dbReference type="GO" id="GO:0043531">
    <property type="term" value="F:ADP binding"/>
    <property type="evidence" value="ECO:0007669"/>
    <property type="project" value="TreeGrafter"/>
</dbReference>
<dbReference type="GO" id="GO:0005524">
    <property type="term" value="F:ATP binding"/>
    <property type="evidence" value="ECO:0007669"/>
    <property type="project" value="UniProtKB-UniRule"/>
</dbReference>
<dbReference type="GO" id="GO:0046933">
    <property type="term" value="F:proton-transporting ATP synthase activity, rotational mechanism"/>
    <property type="evidence" value="ECO:0007669"/>
    <property type="project" value="UniProtKB-UniRule"/>
</dbReference>
<dbReference type="CDD" id="cd18113">
    <property type="entry name" value="ATP-synt_F1_alpha_C"/>
    <property type="match status" value="1"/>
</dbReference>
<dbReference type="CDD" id="cd18116">
    <property type="entry name" value="ATP-synt_F1_alpha_N"/>
    <property type="match status" value="1"/>
</dbReference>
<dbReference type="CDD" id="cd01132">
    <property type="entry name" value="F1-ATPase_alpha_CD"/>
    <property type="match status" value="1"/>
</dbReference>
<dbReference type="FunFam" id="1.20.150.20:FF:000001">
    <property type="entry name" value="ATP synthase subunit alpha"/>
    <property type="match status" value="1"/>
</dbReference>
<dbReference type="FunFam" id="2.40.30.20:FF:000001">
    <property type="entry name" value="ATP synthase subunit alpha"/>
    <property type="match status" value="1"/>
</dbReference>
<dbReference type="FunFam" id="3.40.50.300:FF:000002">
    <property type="entry name" value="ATP synthase subunit alpha"/>
    <property type="match status" value="1"/>
</dbReference>
<dbReference type="Gene3D" id="2.40.30.20">
    <property type="match status" value="1"/>
</dbReference>
<dbReference type="Gene3D" id="1.20.150.20">
    <property type="entry name" value="ATP synthase alpha/beta chain, C-terminal domain"/>
    <property type="match status" value="1"/>
</dbReference>
<dbReference type="Gene3D" id="3.40.50.300">
    <property type="entry name" value="P-loop containing nucleotide triphosphate hydrolases"/>
    <property type="match status" value="1"/>
</dbReference>
<dbReference type="HAMAP" id="MF_01346">
    <property type="entry name" value="ATP_synth_alpha_bact"/>
    <property type="match status" value="1"/>
</dbReference>
<dbReference type="InterPro" id="IPR023366">
    <property type="entry name" value="ATP_synth_asu-like_sf"/>
</dbReference>
<dbReference type="InterPro" id="IPR000793">
    <property type="entry name" value="ATP_synth_asu_C"/>
</dbReference>
<dbReference type="InterPro" id="IPR038376">
    <property type="entry name" value="ATP_synth_asu_C_sf"/>
</dbReference>
<dbReference type="InterPro" id="IPR033732">
    <property type="entry name" value="ATP_synth_F1_a_nt-bd_dom"/>
</dbReference>
<dbReference type="InterPro" id="IPR005294">
    <property type="entry name" value="ATP_synth_F1_asu"/>
</dbReference>
<dbReference type="InterPro" id="IPR020003">
    <property type="entry name" value="ATPase_a/bsu_AS"/>
</dbReference>
<dbReference type="InterPro" id="IPR004100">
    <property type="entry name" value="ATPase_F1/V1/A1_a/bsu_N"/>
</dbReference>
<dbReference type="InterPro" id="IPR036121">
    <property type="entry name" value="ATPase_F1/V1/A1_a/bsu_N_sf"/>
</dbReference>
<dbReference type="InterPro" id="IPR000194">
    <property type="entry name" value="ATPase_F1/V1/A1_a/bsu_nucl-bd"/>
</dbReference>
<dbReference type="InterPro" id="IPR027417">
    <property type="entry name" value="P-loop_NTPase"/>
</dbReference>
<dbReference type="NCBIfam" id="TIGR00962">
    <property type="entry name" value="atpA"/>
    <property type="match status" value="1"/>
</dbReference>
<dbReference type="NCBIfam" id="NF009884">
    <property type="entry name" value="PRK13343.1"/>
    <property type="match status" value="1"/>
</dbReference>
<dbReference type="PANTHER" id="PTHR48082">
    <property type="entry name" value="ATP SYNTHASE SUBUNIT ALPHA, MITOCHONDRIAL"/>
    <property type="match status" value="1"/>
</dbReference>
<dbReference type="PANTHER" id="PTHR48082:SF2">
    <property type="entry name" value="ATP SYNTHASE SUBUNIT ALPHA, MITOCHONDRIAL"/>
    <property type="match status" value="1"/>
</dbReference>
<dbReference type="Pfam" id="PF00006">
    <property type="entry name" value="ATP-synt_ab"/>
    <property type="match status" value="1"/>
</dbReference>
<dbReference type="Pfam" id="PF00306">
    <property type="entry name" value="ATP-synt_ab_C"/>
    <property type="match status" value="1"/>
</dbReference>
<dbReference type="Pfam" id="PF02874">
    <property type="entry name" value="ATP-synt_ab_N"/>
    <property type="match status" value="1"/>
</dbReference>
<dbReference type="SUPFAM" id="SSF47917">
    <property type="entry name" value="C-terminal domain of alpha and beta subunits of F1 ATP synthase"/>
    <property type="match status" value="1"/>
</dbReference>
<dbReference type="SUPFAM" id="SSF50615">
    <property type="entry name" value="N-terminal domain of alpha and beta subunits of F1 ATP synthase"/>
    <property type="match status" value="1"/>
</dbReference>
<dbReference type="SUPFAM" id="SSF52540">
    <property type="entry name" value="P-loop containing nucleoside triphosphate hydrolases"/>
    <property type="match status" value="1"/>
</dbReference>
<dbReference type="PROSITE" id="PS00152">
    <property type="entry name" value="ATPASE_ALPHA_BETA"/>
    <property type="match status" value="1"/>
</dbReference>
<keyword id="KW-0066">ATP synthesis</keyword>
<keyword id="KW-0067">ATP-binding</keyword>
<keyword id="KW-0997">Cell inner membrane</keyword>
<keyword id="KW-1003">Cell membrane</keyword>
<keyword id="KW-0139">CF(1)</keyword>
<keyword id="KW-0375">Hydrogen ion transport</keyword>
<keyword id="KW-0406">Ion transport</keyword>
<keyword id="KW-0472">Membrane</keyword>
<keyword id="KW-0547">Nucleotide-binding</keyword>
<keyword id="KW-1278">Translocase</keyword>
<keyword id="KW-0813">Transport</keyword>
<organism>
    <name type="scientific">Klebsiella pneumoniae subsp. pneumoniae (strain ATCC 700721 / MGH 78578)</name>
    <dbReference type="NCBI Taxonomy" id="272620"/>
    <lineage>
        <taxon>Bacteria</taxon>
        <taxon>Pseudomonadati</taxon>
        <taxon>Pseudomonadota</taxon>
        <taxon>Gammaproteobacteria</taxon>
        <taxon>Enterobacterales</taxon>
        <taxon>Enterobacteriaceae</taxon>
        <taxon>Klebsiella/Raoultella group</taxon>
        <taxon>Klebsiella</taxon>
        <taxon>Klebsiella pneumoniae complex</taxon>
    </lineage>
</organism>
<protein>
    <recommendedName>
        <fullName evidence="1">ATP synthase subunit alpha</fullName>
        <ecNumber evidence="1">7.1.2.2</ecNumber>
    </recommendedName>
    <alternativeName>
        <fullName evidence="1">ATP synthase F1 sector subunit alpha</fullName>
    </alternativeName>
    <alternativeName>
        <fullName evidence="1">F-ATPase subunit alpha</fullName>
    </alternativeName>
</protein>
<comment type="function">
    <text evidence="1">Produces ATP from ADP in the presence of a proton gradient across the membrane. The alpha chain is a regulatory subunit.</text>
</comment>
<comment type="catalytic activity">
    <reaction evidence="1">
        <text>ATP + H2O + 4 H(+)(in) = ADP + phosphate + 5 H(+)(out)</text>
        <dbReference type="Rhea" id="RHEA:57720"/>
        <dbReference type="ChEBI" id="CHEBI:15377"/>
        <dbReference type="ChEBI" id="CHEBI:15378"/>
        <dbReference type="ChEBI" id="CHEBI:30616"/>
        <dbReference type="ChEBI" id="CHEBI:43474"/>
        <dbReference type="ChEBI" id="CHEBI:456216"/>
        <dbReference type="EC" id="7.1.2.2"/>
    </reaction>
</comment>
<comment type="subunit">
    <text evidence="1">F-type ATPases have 2 components, CF(1) - the catalytic core - and CF(0) - the membrane proton channel. CF(1) has five subunits: alpha(3), beta(3), gamma(1), delta(1), epsilon(1). CF(0) has three main subunits: a(1), b(2) and c(9-12). The alpha and beta chains form an alternating ring which encloses part of the gamma chain. CF(1) is attached to CF(0) by a central stalk formed by the gamma and epsilon chains, while a peripheral stalk is formed by the delta and b chains.</text>
</comment>
<comment type="subcellular location">
    <subcellularLocation>
        <location evidence="1">Cell inner membrane</location>
        <topology evidence="1">Peripheral membrane protein</topology>
    </subcellularLocation>
</comment>
<comment type="similarity">
    <text evidence="1">Belongs to the ATPase alpha/beta chains family.</text>
</comment>
<reference key="1">
    <citation type="submission" date="2006-09" db="EMBL/GenBank/DDBJ databases">
        <authorList>
            <consortium name="The Klebsiella pneumonia Genome Sequencing Project"/>
            <person name="McClelland M."/>
            <person name="Sanderson E.K."/>
            <person name="Spieth J."/>
            <person name="Clifton W.S."/>
            <person name="Latreille P."/>
            <person name="Sabo A."/>
            <person name="Pepin K."/>
            <person name="Bhonagiri V."/>
            <person name="Porwollik S."/>
            <person name="Ali J."/>
            <person name="Wilson R.K."/>
        </authorList>
    </citation>
    <scope>NUCLEOTIDE SEQUENCE [LARGE SCALE GENOMIC DNA]</scope>
    <source>
        <strain>ATCC 700721 / MGH 78578</strain>
    </source>
</reference>
<name>ATPA_KLEP7</name>
<feature type="chain" id="PRO_1000055070" description="ATP synthase subunit alpha">
    <location>
        <begin position="1"/>
        <end position="513"/>
    </location>
</feature>
<feature type="binding site" evidence="1">
    <location>
        <begin position="169"/>
        <end position="176"/>
    </location>
    <ligand>
        <name>ATP</name>
        <dbReference type="ChEBI" id="CHEBI:30616"/>
    </ligand>
</feature>
<feature type="site" description="Required for activity" evidence="1">
    <location>
        <position position="373"/>
    </location>
</feature>